<evidence type="ECO:0000255" key="1">
    <source>
        <dbReference type="HAMAP-Rule" id="MF_01039"/>
    </source>
</evidence>
<feature type="chain" id="PRO_1000135922" description="2,3-bisphosphoglycerate-dependent phosphoglycerate mutase">
    <location>
        <begin position="1"/>
        <end position="250"/>
    </location>
</feature>
<feature type="active site" description="Tele-phosphohistidine intermediate" evidence="1">
    <location>
        <position position="9"/>
    </location>
</feature>
<feature type="active site" description="Proton donor/acceptor" evidence="1">
    <location>
        <position position="87"/>
    </location>
</feature>
<feature type="binding site" evidence="1">
    <location>
        <begin position="8"/>
        <end position="15"/>
    </location>
    <ligand>
        <name>substrate</name>
    </ligand>
</feature>
<feature type="binding site" evidence="1">
    <location>
        <begin position="21"/>
        <end position="22"/>
    </location>
    <ligand>
        <name>substrate</name>
    </ligand>
</feature>
<feature type="binding site" evidence="1">
    <location>
        <position position="60"/>
    </location>
    <ligand>
        <name>substrate</name>
    </ligand>
</feature>
<feature type="binding site" evidence="1">
    <location>
        <begin position="87"/>
        <end position="90"/>
    </location>
    <ligand>
        <name>substrate</name>
    </ligand>
</feature>
<feature type="binding site" evidence="1">
    <location>
        <position position="98"/>
    </location>
    <ligand>
        <name>substrate</name>
    </ligand>
</feature>
<feature type="binding site" evidence="1">
    <location>
        <begin position="114"/>
        <end position="115"/>
    </location>
    <ligand>
        <name>substrate</name>
    </ligand>
</feature>
<feature type="binding site" evidence="1">
    <location>
        <begin position="183"/>
        <end position="184"/>
    </location>
    <ligand>
        <name>substrate</name>
    </ligand>
</feature>
<feature type="site" description="Transition state stabilizer" evidence="1">
    <location>
        <position position="182"/>
    </location>
</feature>
<reference key="1">
    <citation type="journal article" date="2008" name="PLoS Genet.">
        <title>The genome of Borrelia recurrentis, the agent of deadly louse-borne relapsing fever, is a degraded subset of tick-borne Borrelia duttonii.</title>
        <authorList>
            <person name="Lescot M."/>
            <person name="Audic S."/>
            <person name="Robert C."/>
            <person name="Nguyen T.T."/>
            <person name="Blanc G."/>
            <person name="Cutler S.J."/>
            <person name="Wincker P."/>
            <person name="Couloux A."/>
            <person name="Claverie J.-M."/>
            <person name="Raoult D."/>
            <person name="Drancourt M."/>
        </authorList>
    </citation>
    <scope>NUCLEOTIDE SEQUENCE [LARGE SCALE GENOMIC DNA]</scope>
    <source>
        <strain>Ly</strain>
    </source>
</reference>
<proteinExistence type="inferred from homology"/>
<comment type="function">
    <text evidence="1">Catalyzes the interconversion of 2-phosphoglycerate and 3-phosphoglycerate.</text>
</comment>
<comment type="catalytic activity">
    <reaction evidence="1">
        <text>(2R)-2-phosphoglycerate = (2R)-3-phosphoglycerate</text>
        <dbReference type="Rhea" id="RHEA:15901"/>
        <dbReference type="ChEBI" id="CHEBI:58272"/>
        <dbReference type="ChEBI" id="CHEBI:58289"/>
        <dbReference type="EC" id="5.4.2.11"/>
    </reaction>
</comment>
<comment type="pathway">
    <text evidence="1">Carbohydrate degradation; glycolysis; pyruvate from D-glyceraldehyde 3-phosphate: step 3/5.</text>
</comment>
<comment type="similarity">
    <text evidence="1">Belongs to the phosphoglycerate mutase family. BPG-dependent PGAM subfamily.</text>
</comment>
<organism>
    <name type="scientific">Borrelia duttonii (strain Ly)</name>
    <dbReference type="NCBI Taxonomy" id="412419"/>
    <lineage>
        <taxon>Bacteria</taxon>
        <taxon>Pseudomonadati</taxon>
        <taxon>Spirochaetota</taxon>
        <taxon>Spirochaetia</taxon>
        <taxon>Spirochaetales</taxon>
        <taxon>Borreliaceae</taxon>
        <taxon>Borrelia</taxon>
    </lineage>
</organism>
<accession>B5RMK4</accession>
<keyword id="KW-0312">Gluconeogenesis</keyword>
<keyword id="KW-0324">Glycolysis</keyword>
<keyword id="KW-0413">Isomerase</keyword>
<sequence length="250" mass="28598">MYKLVLVRHGESEWNKENLFTGWTDVKLSEKGVSEACEGGRILKEEGYSFDIAFSSMLVRANDTLNIILCELGQSYIDVEKSWRLNERHYGALQGLNKAETAEKYGEDKVLIWRRSYNVPPMPLDESDKRHPIHDSRYKNIPKSELPSTECLKDTVARVIPYWTDKIAKAILEGKRVIVAAHGNSLRALVKYLDNMSEEDILKLNIPTGIPLVYELDKNLKPVKHYYLGDEDKIKAAMESVANQGKKIDR</sequence>
<protein>
    <recommendedName>
        <fullName evidence="1">2,3-bisphosphoglycerate-dependent phosphoglycerate mutase</fullName>
        <shortName evidence="1">BPG-dependent PGAM</shortName>
        <shortName evidence="1">PGAM</shortName>
        <shortName evidence="1">Phosphoglyceromutase</shortName>
        <shortName evidence="1">dPGM</shortName>
        <ecNumber evidence="1">5.4.2.11</ecNumber>
    </recommendedName>
</protein>
<gene>
    <name evidence="1" type="primary">gpmA</name>
    <name type="ordered locus">BDU_661</name>
</gene>
<dbReference type="EC" id="5.4.2.11" evidence="1"/>
<dbReference type="EMBL" id="CP000976">
    <property type="protein sequence ID" value="ACH93590.1"/>
    <property type="molecule type" value="Genomic_DNA"/>
</dbReference>
<dbReference type="RefSeq" id="WP_012538399.1">
    <property type="nucleotide sequence ID" value="NC_011229.1"/>
</dbReference>
<dbReference type="SMR" id="B5RMK4"/>
<dbReference type="STRING" id="412419.BDU_661"/>
<dbReference type="KEGG" id="bdu:BDU_661"/>
<dbReference type="eggNOG" id="COG0588">
    <property type="taxonomic scope" value="Bacteria"/>
</dbReference>
<dbReference type="HOGENOM" id="CLU_033323_1_1_12"/>
<dbReference type="OrthoDB" id="9781415at2"/>
<dbReference type="UniPathway" id="UPA00109">
    <property type="reaction ID" value="UER00186"/>
</dbReference>
<dbReference type="Proteomes" id="UP000000611">
    <property type="component" value="Chromosome"/>
</dbReference>
<dbReference type="GO" id="GO:0004619">
    <property type="term" value="F:phosphoglycerate mutase activity"/>
    <property type="evidence" value="ECO:0007669"/>
    <property type="project" value="UniProtKB-EC"/>
</dbReference>
<dbReference type="GO" id="GO:0006094">
    <property type="term" value="P:gluconeogenesis"/>
    <property type="evidence" value="ECO:0007669"/>
    <property type="project" value="UniProtKB-UniRule"/>
</dbReference>
<dbReference type="GO" id="GO:0006096">
    <property type="term" value="P:glycolytic process"/>
    <property type="evidence" value="ECO:0007669"/>
    <property type="project" value="UniProtKB-UniRule"/>
</dbReference>
<dbReference type="CDD" id="cd07067">
    <property type="entry name" value="HP_PGM_like"/>
    <property type="match status" value="1"/>
</dbReference>
<dbReference type="FunFam" id="3.40.50.1240:FF:000003">
    <property type="entry name" value="2,3-bisphosphoglycerate-dependent phosphoglycerate mutase"/>
    <property type="match status" value="1"/>
</dbReference>
<dbReference type="Gene3D" id="3.40.50.1240">
    <property type="entry name" value="Phosphoglycerate mutase-like"/>
    <property type="match status" value="1"/>
</dbReference>
<dbReference type="HAMAP" id="MF_01039">
    <property type="entry name" value="PGAM_GpmA"/>
    <property type="match status" value="1"/>
</dbReference>
<dbReference type="InterPro" id="IPR013078">
    <property type="entry name" value="His_Pase_superF_clade-1"/>
</dbReference>
<dbReference type="InterPro" id="IPR029033">
    <property type="entry name" value="His_PPase_superfam"/>
</dbReference>
<dbReference type="InterPro" id="IPR001345">
    <property type="entry name" value="PG/BPGM_mutase_AS"/>
</dbReference>
<dbReference type="InterPro" id="IPR005952">
    <property type="entry name" value="Phosphogly_mut1"/>
</dbReference>
<dbReference type="NCBIfam" id="TIGR01258">
    <property type="entry name" value="pgm_1"/>
    <property type="match status" value="1"/>
</dbReference>
<dbReference type="NCBIfam" id="NF010713">
    <property type="entry name" value="PRK14115.1"/>
    <property type="match status" value="1"/>
</dbReference>
<dbReference type="PANTHER" id="PTHR11931">
    <property type="entry name" value="PHOSPHOGLYCERATE MUTASE"/>
    <property type="match status" value="1"/>
</dbReference>
<dbReference type="Pfam" id="PF00300">
    <property type="entry name" value="His_Phos_1"/>
    <property type="match status" value="2"/>
</dbReference>
<dbReference type="PIRSF" id="PIRSF000709">
    <property type="entry name" value="6PFK_2-Ptase"/>
    <property type="match status" value="1"/>
</dbReference>
<dbReference type="SMART" id="SM00855">
    <property type="entry name" value="PGAM"/>
    <property type="match status" value="1"/>
</dbReference>
<dbReference type="SUPFAM" id="SSF53254">
    <property type="entry name" value="Phosphoglycerate mutase-like"/>
    <property type="match status" value="1"/>
</dbReference>
<dbReference type="PROSITE" id="PS00175">
    <property type="entry name" value="PG_MUTASE"/>
    <property type="match status" value="1"/>
</dbReference>
<name>GPMA_BORDL</name>